<name>ATPD_HISS1</name>
<protein>
    <recommendedName>
        <fullName evidence="1">ATP synthase subunit delta</fullName>
    </recommendedName>
    <alternativeName>
        <fullName evidence="1">ATP synthase F(1) sector subunit delta</fullName>
    </alternativeName>
    <alternativeName>
        <fullName evidence="1">F-type ATPase subunit delta</fullName>
        <shortName evidence="1">F-ATPase subunit delta</shortName>
    </alternativeName>
</protein>
<comment type="function">
    <text evidence="1">F(1)F(0) ATP synthase produces ATP from ADP in the presence of a proton or sodium gradient. F-type ATPases consist of two structural domains, F(1) containing the extramembraneous catalytic core and F(0) containing the membrane proton channel, linked together by a central stalk and a peripheral stalk. During catalysis, ATP synthesis in the catalytic domain of F(1) is coupled via a rotary mechanism of the central stalk subunits to proton translocation.</text>
</comment>
<comment type="function">
    <text evidence="1">This protein is part of the stalk that links CF(0) to CF(1). It either transmits conformational changes from CF(0) to CF(1) or is implicated in proton conduction.</text>
</comment>
<comment type="subunit">
    <text evidence="1">F-type ATPases have 2 components, F(1) - the catalytic core - and F(0) - the membrane proton channel. F(1) has five subunits: alpha(3), beta(3), gamma(1), delta(1), epsilon(1). F(0) has three main subunits: a(1), b(2) and c(10-14). The alpha and beta chains form an alternating ring which encloses part of the gamma chain. F(1) is attached to F(0) by a central stalk formed by the gamma and epsilon chains, while a peripheral stalk is formed by the delta and b chains.</text>
</comment>
<comment type="subcellular location">
    <subcellularLocation>
        <location evidence="1">Cell inner membrane</location>
        <topology evidence="1">Peripheral membrane protein</topology>
    </subcellularLocation>
</comment>
<comment type="similarity">
    <text evidence="1">Belongs to the ATPase delta chain family.</text>
</comment>
<comment type="sequence caution" evidence="2">
    <conflict type="erroneous initiation">
        <sequence resource="EMBL-CDS" id="ABI25967"/>
    </conflict>
</comment>
<evidence type="ECO:0000255" key="1">
    <source>
        <dbReference type="HAMAP-Rule" id="MF_01416"/>
    </source>
</evidence>
<evidence type="ECO:0000305" key="2"/>
<proteinExistence type="inferred from homology"/>
<accession>Q0I5X0</accession>
<organism>
    <name type="scientific">Histophilus somni (strain 129Pt)</name>
    <name type="common">Haemophilus somnus</name>
    <dbReference type="NCBI Taxonomy" id="205914"/>
    <lineage>
        <taxon>Bacteria</taxon>
        <taxon>Pseudomonadati</taxon>
        <taxon>Pseudomonadota</taxon>
        <taxon>Gammaproteobacteria</taxon>
        <taxon>Pasteurellales</taxon>
        <taxon>Pasteurellaceae</taxon>
        <taxon>Histophilus</taxon>
    </lineage>
</organism>
<reference key="1">
    <citation type="journal article" date="2007" name="J. Bacteriol.">
        <title>Complete genome sequence of Haemophilus somnus (Histophilus somni) strain 129Pt and comparison to Haemophilus ducreyi 35000HP and Haemophilus influenzae Rd.</title>
        <authorList>
            <person name="Challacombe J.F."/>
            <person name="Duncan A.J."/>
            <person name="Brettin T.S."/>
            <person name="Bruce D."/>
            <person name="Chertkov O."/>
            <person name="Detter J.C."/>
            <person name="Han C.S."/>
            <person name="Misra M."/>
            <person name="Richardson P."/>
            <person name="Tapia R."/>
            <person name="Thayer N."/>
            <person name="Xie G."/>
            <person name="Inzana T.J."/>
        </authorList>
    </citation>
    <scope>NUCLEOTIDE SEQUENCE [LARGE SCALE GENOMIC DNA]</scope>
    <source>
        <strain>129Pt</strain>
    </source>
</reference>
<feature type="chain" id="PRO_0000370995" description="ATP synthase subunit delta">
    <location>
        <begin position="1"/>
        <end position="182"/>
    </location>
</feature>
<gene>
    <name evidence="1" type="primary">atpH</name>
    <name type="ordered locus">HS_1699</name>
</gene>
<dbReference type="EMBL" id="CP000436">
    <property type="protein sequence ID" value="ABI25967.1"/>
    <property type="status" value="ALT_INIT"/>
    <property type="molecule type" value="Genomic_DNA"/>
</dbReference>
<dbReference type="SMR" id="Q0I5X0"/>
<dbReference type="KEGG" id="hso:HS_1699"/>
<dbReference type="eggNOG" id="COG0712">
    <property type="taxonomic scope" value="Bacteria"/>
</dbReference>
<dbReference type="HOGENOM" id="CLU_085114_3_0_6"/>
<dbReference type="GO" id="GO:0005886">
    <property type="term" value="C:plasma membrane"/>
    <property type="evidence" value="ECO:0007669"/>
    <property type="project" value="UniProtKB-SubCell"/>
</dbReference>
<dbReference type="GO" id="GO:0045259">
    <property type="term" value="C:proton-transporting ATP synthase complex"/>
    <property type="evidence" value="ECO:0007669"/>
    <property type="project" value="UniProtKB-KW"/>
</dbReference>
<dbReference type="GO" id="GO:0046933">
    <property type="term" value="F:proton-transporting ATP synthase activity, rotational mechanism"/>
    <property type="evidence" value="ECO:0007669"/>
    <property type="project" value="UniProtKB-UniRule"/>
</dbReference>
<dbReference type="Gene3D" id="1.10.520.20">
    <property type="entry name" value="N-terminal domain of the delta subunit of the F1F0-ATP synthase"/>
    <property type="match status" value="1"/>
</dbReference>
<dbReference type="HAMAP" id="MF_01416">
    <property type="entry name" value="ATP_synth_delta_bact"/>
    <property type="match status" value="1"/>
</dbReference>
<dbReference type="InterPro" id="IPR026015">
    <property type="entry name" value="ATP_synth_OSCP/delta_N_sf"/>
</dbReference>
<dbReference type="InterPro" id="IPR020781">
    <property type="entry name" value="ATPase_OSCP/d_CS"/>
</dbReference>
<dbReference type="InterPro" id="IPR000711">
    <property type="entry name" value="ATPase_OSCP/dsu"/>
</dbReference>
<dbReference type="NCBIfam" id="TIGR01145">
    <property type="entry name" value="ATP_synt_delta"/>
    <property type="match status" value="1"/>
</dbReference>
<dbReference type="NCBIfam" id="NF004402">
    <property type="entry name" value="PRK05758.2-2"/>
    <property type="match status" value="1"/>
</dbReference>
<dbReference type="NCBIfam" id="NF004404">
    <property type="entry name" value="PRK05758.2-5"/>
    <property type="match status" value="1"/>
</dbReference>
<dbReference type="PANTHER" id="PTHR11910">
    <property type="entry name" value="ATP SYNTHASE DELTA CHAIN"/>
    <property type="match status" value="1"/>
</dbReference>
<dbReference type="Pfam" id="PF00213">
    <property type="entry name" value="OSCP"/>
    <property type="match status" value="1"/>
</dbReference>
<dbReference type="PRINTS" id="PR00125">
    <property type="entry name" value="ATPASEDELTA"/>
</dbReference>
<dbReference type="SUPFAM" id="SSF47928">
    <property type="entry name" value="N-terminal domain of the delta subunit of the F1F0-ATP synthase"/>
    <property type="match status" value="1"/>
</dbReference>
<dbReference type="PROSITE" id="PS00389">
    <property type="entry name" value="ATPASE_DELTA"/>
    <property type="match status" value="1"/>
</dbReference>
<sequence>MSELTTIARPYAKAVFDFAVEQSEKDKSTVEKWANMLEFLSELIRHDKVQTYLTSTSSTFKLADTVISICSEQLDQYGQNLVRLMAENKRLSVLPAVFNEFKSYVEEYKSLSQVEVISAQQLNDVQQQKIITAMEKRLARKVILNCRIDSSLIAGAIIRTNDFVIDGSCRGQINRLANELRL</sequence>
<keyword id="KW-0066">ATP synthesis</keyword>
<keyword id="KW-0997">Cell inner membrane</keyword>
<keyword id="KW-1003">Cell membrane</keyword>
<keyword id="KW-0139">CF(1)</keyword>
<keyword id="KW-0375">Hydrogen ion transport</keyword>
<keyword id="KW-0406">Ion transport</keyword>
<keyword id="KW-0472">Membrane</keyword>
<keyword id="KW-0813">Transport</keyword>